<name>MIAB_STRAW</name>
<organism>
    <name type="scientific">Streptomyces avermitilis (strain ATCC 31267 / DSM 46492 / JCM 5070 / NBRC 14893 / NCIMB 12804 / NRRL 8165 / MA-4680)</name>
    <dbReference type="NCBI Taxonomy" id="227882"/>
    <lineage>
        <taxon>Bacteria</taxon>
        <taxon>Bacillati</taxon>
        <taxon>Actinomycetota</taxon>
        <taxon>Actinomycetes</taxon>
        <taxon>Kitasatosporales</taxon>
        <taxon>Streptomycetaceae</taxon>
        <taxon>Streptomyces</taxon>
    </lineage>
</organism>
<reference key="1">
    <citation type="journal article" date="2003" name="Nat. Biotechnol.">
        <title>Complete genome sequence and comparative analysis of the industrial microorganism Streptomyces avermitilis.</title>
        <authorList>
            <person name="Ikeda H."/>
            <person name="Ishikawa J."/>
            <person name="Hanamoto A."/>
            <person name="Shinose M."/>
            <person name="Kikuchi H."/>
            <person name="Shiba T."/>
            <person name="Sakaki Y."/>
            <person name="Hattori M."/>
            <person name="Omura S."/>
        </authorList>
    </citation>
    <scope>NUCLEOTIDE SEQUENCE [LARGE SCALE GENOMIC DNA]</scope>
    <source>
        <strain>ATCC 31267 / DSM 46492 / JCM 5070 / NBRC 14893 / NCIMB 12804 / NRRL 8165 / MA-4680</strain>
    </source>
</reference>
<reference key="2">
    <citation type="journal article" date="2001" name="Proc. Natl. Acad. Sci. U.S.A.">
        <title>Genome sequence of an industrial microorganism Streptomyces avermitilis: deducing the ability of producing secondary metabolites.</title>
        <authorList>
            <person name="Omura S."/>
            <person name="Ikeda H."/>
            <person name="Ishikawa J."/>
            <person name="Hanamoto A."/>
            <person name="Takahashi C."/>
            <person name="Shinose M."/>
            <person name="Takahashi Y."/>
            <person name="Horikawa H."/>
            <person name="Nakazawa H."/>
            <person name="Osonoe T."/>
            <person name="Kikuchi H."/>
            <person name="Shiba T."/>
            <person name="Sakaki Y."/>
            <person name="Hattori M."/>
        </authorList>
    </citation>
    <scope>NUCLEOTIDE SEQUENCE [LARGE SCALE GENOMIC DNA]</scope>
    <source>
        <strain>ATCC 31267 / DSM 46492 / JCM 5070 / NBRC 14893 / NCIMB 12804 / NRRL 8165 / MA-4680</strain>
    </source>
</reference>
<accession>Q82KC4</accession>
<protein>
    <recommendedName>
        <fullName evidence="1">tRNA-2-methylthio-N(6)-dimethylallyladenosine synthase</fullName>
        <ecNumber evidence="1">2.8.4.3</ecNumber>
    </recommendedName>
    <alternativeName>
        <fullName evidence="1">(Dimethylallyl)adenosine tRNA methylthiotransferase MiaB</fullName>
    </alternativeName>
    <alternativeName>
        <fullName evidence="1">tRNA-i(6)A37 methylthiotransferase</fullName>
    </alternativeName>
</protein>
<sequence>MSSIDRSQPVGVKTYEVRTYGCQMNVHDSERLSGLLEDAGYVRAPDGSDGDADVVVFNTCAVRENADNRLYGNLGRLAPMKTKRPGMQIAVGGCLAQKDRDTIVTKAPWVDVVFGTHNIGKLPVLLERARVQEEAQVEIAESLEAFPSTLPTRRESAYAAWVSISVGCNNTCTFCIVPALRGKEKDRRTGDILAEIEALVGEGVSEITLLGQNVNAYGSDIGDREAFSKLLRACGQIDGLERVRFTSPHPRDFTDDVIAAMAETPNVMPQLHMPMQSGSDTVLKAMRRSYRQDRYLGIIEKVRAAIPHAAITTDIIVGFPGETEEDFEQTMHAVREARFTQAFTFQYSKRPGTPAATMENQIPKEVVQARYERLVALQEEISWDENKKQVGRTLELMVAEGEGRKDGATHRLSGRAPDNRLVHFTKPDEEVRPGDVVTVEVTYAAPHHLLAEGPVLNVRRTRAGDAWEKRHIEKTAEAAKPAGVMLGLPKIGAPEPLPVATGSGCGCD</sequence>
<evidence type="ECO:0000255" key="1">
    <source>
        <dbReference type="HAMAP-Rule" id="MF_01864"/>
    </source>
</evidence>
<evidence type="ECO:0000255" key="2">
    <source>
        <dbReference type="PROSITE-ProRule" id="PRU01266"/>
    </source>
</evidence>
<comment type="function">
    <text evidence="1">Catalyzes the methylthiolation of N6-(dimethylallyl)adenosine (i(6)A), leading to the formation of 2-methylthio-N6-(dimethylallyl)adenosine (ms(2)i(6)A) at position 37 in tRNAs that read codons beginning with uridine.</text>
</comment>
<comment type="catalytic activity">
    <reaction evidence="1">
        <text>N(6)-dimethylallyladenosine(37) in tRNA + (sulfur carrier)-SH + AH2 + 2 S-adenosyl-L-methionine = 2-methylsulfanyl-N(6)-dimethylallyladenosine(37) in tRNA + (sulfur carrier)-H + 5'-deoxyadenosine + L-methionine + A + S-adenosyl-L-homocysteine + 2 H(+)</text>
        <dbReference type="Rhea" id="RHEA:37067"/>
        <dbReference type="Rhea" id="RHEA-COMP:10375"/>
        <dbReference type="Rhea" id="RHEA-COMP:10376"/>
        <dbReference type="Rhea" id="RHEA-COMP:14737"/>
        <dbReference type="Rhea" id="RHEA-COMP:14739"/>
        <dbReference type="ChEBI" id="CHEBI:13193"/>
        <dbReference type="ChEBI" id="CHEBI:15378"/>
        <dbReference type="ChEBI" id="CHEBI:17319"/>
        <dbReference type="ChEBI" id="CHEBI:17499"/>
        <dbReference type="ChEBI" id="CHEBI:29917"/>
        <dbReference type="ChEBI" id="CHEBI:57844"/>
        <dbReference type="ChEBI" id="CHEBI:57856"/>
        <dbReference type="ChEBI" id="CHEBI:59789"/>
        <dbReference type="ChEBI" id="CHEBI:64428"/>
        <dbReference type="ChEBI" id="CHEBI:74415"/>
        <dbReference type="ChEBI" id="CHEBI:74417"/>
        <dbReference type="EC" id="2.8.4.3"/>
    </reaction>
</comment>
<comment type="cofactor">
    <cofactor evidence="1">
        <name>[4Fe-4S] cluster</name>
        <dbReference type="ChEBI" id="CHEBI:49883"/>
    </cofactor>
    <text evidence="1">Binds 2 [4Fe-4S] clusters. One cluster is coordinated with 3 cysteines and an exchangeable S-adenosyl-L-methionine.</text>
</comment>
<comment type="subunit">
    <text evidence="1">Monomer.</text>
</comment>
<comment type="subcellular location">
    <subcellularLocation>
        <location evidence="1">Cytoplasm</location>
    </subcellularLocation>
</comment>
<comment type="similarity">
    <text evidence="1">Belongs to the methylthiotransferase family. MiaB subfamily.</text>
</comment>
<keyword id="KW-0004">4Fe-4S</keyword>
<keyword id="KW-0963">Cytoplasm</keyword>
<keyword id="KW-0408">Iron</keyword>
<keyword id="KW-0411">Iron-sulfur</keyword>
<keyword id="KW-0479">Metal-binding</keyword>
<keyword id="KW-1185">Reference proteome</keyword>
<keyword id="KW-0949">S-adenosyl-L-methionine</keyword>
<keyword id="KW-0808">Transferase</keyword>
<keyword id="KW-0819">tRNA processing</keyword>
<gene>
    <name evidence="1" type="primary">miaB</name>
    <name type="ordered locus">SAV_2479</name>
</gene>
<feature type="chain" id="PRO_0000374584" description="tRNA-2-methylthio-N(6)-dimethylallyladenosine synthase">
    <location>
        <begin position="1"/>
        <end position="508"/>
    </location>
</feature>
<feature type="domain" description="MTTase N-terminal" evidence="1">
    <location>
        <begin position="13"/>
        <end position="131"/>
    </location>
</feature>
<feature type="domain" description="Radical SAM core" evidence="2">
    <location>
        <begin position="154"/>
        <end position="385"/>
    </location>
</feature>
<feature type="domain" description="TRAM" evidence="1">
    <location>
        <begin position="387"/>
        <end position="455"/>
    </location>
</feature>
<feature type="binding site" evidence="1">
    <location>
        <position position="22"/>
    </location>
    <ligand>
        <name>[4Fe-4S] cluster</name>
        <dbReference type="ChEBI" id="CHEBI:49883"/>
        <label>1</label>
    </ligand>
</feature>
<feature type="binding site" evidence="1">
    <location>
        <position position="60"/>
    </location>
    <ligand>
        <name>[4Fe-4S] cluster</name>
        <dbReference type="ChEBI" id="CHEBI:49883"/>
        <label>1</label>
    </ligand>
</feature>
<feature type="binding site" evidence="1">
    <location>
        <position position="94"/>
    </location>
    <ligand>
        <name>[4Fe-4S] cluster</name>
        <dbReference type="ChEBI" id="CHEBI:49883"/>
        <label>1</label>
    </ligand>
</feature>
<feature type="binding site" evidence="1">
    <location>
        <position position="168"/>
    </location>
    <ligand>
        <name>[4Fe-4S] cluster</name>
        <dbReference type="ChEBI" id="CHEBI:49883"/>
        <label>2</label>
        <note>4Fe-4S-S-AdoMet</note>
    </ligand>
</feature>
<feature type="binding site" evidence="1">
    <location>
        <position position="172"/>
    </location>
    <ligand>
        <name>[4Fe-4S] cluster</name>
        <dbReference type="ChEBI" id="CHEBI:49883"/>
        <label>2</label>
        <note>4Fe-4S-S-AdoMet</note>
    </ligand>
</feature>
<feature type="binding site" evidence="1">
    <location>
        <position position="175"/>
    </location>
    <ligand>
        <name>[4Fe-4S] cluster</name>
        <dbReference type="ChEBI" id="CHEBI:49883"/>
        <label>2</label>
        <note>4Fe-4S-S-AdoMet</note>
    </ligand>
</feature>
<dbReference type="EC" id="2.8.4.3" evidence="1"/>
<dbReference type="EMBL" id="BA000030">
    <property type="protein sequence ID" value="BAC70190.1"/>
    <property type="molecule type" value="Genomic_DNA"/>
</dbReference>
<dbReference type="SMR" id="Q82KC4"/>
<dbReference type="KEGG" id="sma:SAVERM_2479"/>
<dbReference type="eggNOG" id="COG0621">
    <property type="taxonomic scope" value="Bacteria"/>
</dbReference>
<dbReference type="HOGENOM" id="CLU_018697_2_2_11"/>
<dbReference type="OrthoDB" id="9805215at2"/>
<dbReference type="Proteomes" id="UP000000428">
    <property type="component" value="Chromosome"/>
</dbReference>
<dbReference type="GO" id="GO:0005829">
    <property type="term" value="C:cytosol"/>
    <property type="evidence" value="ECO:0007669"/>
    <property type="project" value="TreeGrafter"/>
</dbReference>
<dbReference type="GO" id="GO:0051539">
    <property type="term" value="F:4 iron, 4 sulfur cluster binding"/>
    <property type="evidence" value="ECO:0007669"/>
    <property type="project" value="UniProtKB-UniRule"/>
</dbReference>
<dbReference type="GO" id="GO:0046872">
    <property type="term" value="F:metal ion binding"/>
    <property type="evidence" value="ECO:0007669"/>
    <property type="project" value="UniProtKB-KW"/>
</dbReference>
<dbReference type="GO" id="GO:0035597">
    <property type="term" value="F:N6-isopentenyladenosine methylthiotransferase activity"/>
    <property type="evidence" value="ECO:0007669"/>
    <property type="project" value="TreeGrafter"/>
</dbReference>
<dbReference type="CDD" id="cd01335">
    <property type="entry name" value="Radical_SAM"/>
    <property type="match status" value="1"/>
</dbReference>
<dbReference type="FunFam" id="3.40.50.12160:FF:000008">
    <property type="entry name" value="tRNA-2-methylthio-N(6)-dimethylallyladenosine synthase"/>
    <property type="match status" value="1"/>
</dbReference>
<dbReference type="FunFam" id="3.80.30.20:FF:000001">
    <property type="entry name" value="tRNA-2-methylthio-N(6)-dimethylallyladenosine synthase 2"/>
    <property type="match status" value="1"/>
</dbReference>
<dbReference type="Gene3D" id="3.40.50.12160">
    <property type="entry name" value="Methylthiotransferase, N-terminal domain"/>
    <property type="match status" value="1"/>
</dbReference>
<dbReference type="Gene3D" id="3.80.30.20">
    <property type="entry name" value="tm_1862 like domain"/>
    <property type="match status" value="1"/>
</dbReference>
<dbReference type="HAMAP" id="MF_01864">
    <property type="entry name" value="tRNA_metthiotr_MiaB"/>
    <property type="match status" value="1"/>
</dbReference>
<dbReference type="InterPro" id="IPR006638">
    <property type="entry name" value="Elp3/MiaA/NifB-like_rSAM"/>
</dbReference>
<dbReference type="InterPro" id="IPR005839">
    <property type="entry name" value="Methylthiotransferase"/>
</dbReference>
<dbReference type="InterPro" id="IPR020612">
    <property type="entry name" value="Methylthiotransferase_CS"/>
</dbReference>
<dbReference type="InterPro" id="IPR013848">
    <property type="entry name" value="Methylthiotransferase_N"/>
</dbReference>
<dbReference type="InterPro" id="IPR038135">
    <property type="entry name" value="Methylthiotransferase_N_sf"/>
</dbReference>
<dbReference type="InterPro" id="IPR006463">
    <property type="entry name" value="MiaB_methiolase"/>
</dbReference>
<dbReference type="InterPro" id="IPR007197">
    <property type="entry name" value="rSAM"/>
</dbReference>
<dbReference type="InterPro" id="IPR023404">
    <property type="entry name" value="rSAM_horseshoe"/>
</dbReference>
<dbReference type="InterPro" id="IPR002792">
    <property type="entry name" value="TRAM_dom"/>
</dbReference>
<dbReference type="NCBIfam" id="TIGR01574">
    <property type="entry name" value="miaB-methiolase"/>
    <property type="match status" value="1"/>
</dbReference>
<dbReference type="NCBIfam" id="TIGR00089">
    <property type="entry name" value="MiaB/RimO family radical SAM methylthiotransferase"/>
    <property type="match status" value="1"/>
</dbReference>
<dbReference type="PANTHER" id="PTHR43020">
    <property type="entry name" value="CDK5 REGULATORY SUBUNIT-ASSOCIATED PROTEIN 1"/>
    <property type="match status" value="1"/>
</dbReference>
<dbReference type="PANTHER" id="PTHR43020:SF2">
    <property type="entry name" value="MITOCHONDRIAL TRNA METHYLTHIOTRANSFERASE CDK5RAP1"/>
    <property type="match status" value="1"/>
</dbReference>
<dbReference type="Pfam" id="PF04055">
    <property type="entry name" value="Radical_SAM"/>
    <property type="match status" value="1"/>
</dbReference>
<dbReference type="Pfam" id="PF00919">
    <property type="entry name" value="UPF0004"/>
    <property type="match status" value="1"/>
</dbReference>
<dbReference type="SFLD" id="SFLDF00273">
    <property type="entry name" value="(dimethylallyl)adenosine_tRNA"/>
    <property type="match status" value="1"/>
</dbReference>
<dbReference type="SFLD" id="SFLDG01082">
    <property type="entry name" value="B12-binding_domain_containing"/>
    <property type="match status" value="1"/>
</dbReference>
<dbReference type="SFLD" id="SFLDS00029">
    <property type="entry name" value="Radical_SAM"/>
    <property type="match status" value="1"/>
</dbReference>
<dbReference type="SMART" id="SM00729">
    <property type="entry name" value="Elp3"/>
    <property type="match status" value="1"/>
</dbReference>
<dbReference type="SUPFAM" id="SSF102114">
    <property type="entry name" value="Radical SAM enzymes"/>
    <property type="match status" value="1"/>
</dbReference>
<dbReference type="PROSITE" id="PS51449">
    <property type="entry name" value="MTTASE_N"/>
    <property type="match status" value="1"/>
</dbReference>
<dbReference type="PROSITE" id="PS01278">
    <property type="entry name" value="MTTASE_RADICAL"/>
    <property type="match status" value="1"/>
</dbReference>
<dbReference type="PROSITE" id="PS51918">
    <property type="entry name" value="RADICAL_SAM"/>
    <property type="match status" value="1"/>
</dbReference>
<dbReference type="PROSITE" id="PS50926">
    <property type="entry name" value="TRAM"/>
    <property type="match status" value="1"/>
</dbReference>
<proteinExistence type="inferred from homology"/>